<reference key="1">
    <citation type="journal article" date="2004" name="J. Biol. Chem.">
        <title>JACOP, a novel plaque protein localizing at the apical junctional complex with sequence similarity to cingulin.</title>
        <authorList>
            <person name="Ohnishi H."/>
            <person name="Nakahara T."/>
            <person name="Furuse K."/>
            <person name="Sasaki H."/>
            <person name="Tsukita S."/>
            <person name="Furuse M."/>
        </authorList>
    </citation>
    <scope>NUCLEOTIDE SEQUENCE [MRNA] (ISOFORM 4)</scope>
    <scope>FUNCTION</scope>
    <scope>SUBUNIT</scope>
    <scope>SUBCELLULAR LOCATION</scope>
    <scope>TISSUE SPECIFICITY</scope>
    <scope>DOMAIN</scope>
</reference>
<reference key="2">
    <citation type="journal article" date="2009" name="PLoS Biol.">
        <title>Lineage-specific biology revealed by a finished genome assembly of the mouse.</title>
        <authorList>
            <person name="Church D.M."/>
            <person name="Goodstadt L."/>
            <person name="Hillier L.W."/>
            <person name="Zody M.C."/>
            <person name="Goldstein S."/>
            <person name="She X."/>
            <person name="Bult C.J."/>
            <person name="Agarwala R."/>
            <person name="Cherry J.L."/>
            <person name="DiCuccio M."/>
            <person name="Hlavina W."/>
            <person name="Kapustin Y."/>
            <person name="Meric P."/>
            <person name="Maglott D."/>
            <person name="Birtle Z."/>
            <person name="Marques A.C."/>
            <person name="Graves T."/>
            <person name="Zhou S."/>
            <person name="Teague B."/>
            <person name="Potamousis K."/>
            <person name="Churas C."/>
            <person name="Place M."/>
            <person name="Herschleb J."/>
            <person name="Runnheim R."/>
            <person name="Forrest D."/>
            <person name="Amos-Landgraf J."/>
            <person name="Schwartz D.C."/>
            <person name="Cheng Z."/>
            <person name="Lindblad-Toh K."/>
            <person name="Eichler E.E."/>
            <person name="Ponting C.P."/>
        </authorList>
    </citation>
    <scope>NUCLEOTIDE SEQUENCE [LARGE SCALE GENOMIC DNA]</scope>
    <source>
        <strain>C57BL/6J</strain>
    </source>
</reference>
<reference key="3">
    <citation type="journal article" date="2004" name="Genome Res.">
        <title>The status, quality, and expansion of the NIH full-length cDNA project: the Mammalian Gene Collection (MGC).</title>
        <authorList>
            <consortium name="The MGC Project Team"/>
        </authorList>
    </citation>
    <scope>NUCLEOTIDE SEQUENCE [LARGE SCALE MRNA] (ISOFORM 4)</scope>
    <source>
        <strain>FVB/N</strain>
        <tissue>Mammary tumor</tissue>
        <tissue>Salivary gland</tissue>
    </source>
</reference>
<reference key="4">
    <citation type="journal article" date="2005" name="Science">
        <title>The transcriptional landscape of the mammalian genome.</title>
        <authorList>
            <person name="Carninci P."/>
            <person name="Kasukawa T."/>
            <person name="Katayama S."/>
            <person name="Gough J."/>
            <person name="Frith M.C."/>
            <person name="Maeda N."/>
            <person name="Oyama R."/>
            <person name="Ravasi T."/>
            <person name="Lenhard B."/>
            <person name="Wells C."/>
            <person name="Kodzius R."/>
            <person name="Shimokawa K."/>
            <person name="Bajic V.B."/>
            <person name="Brenner S.E."/>
            <person name="Batalov S."/>
            <person name="Forrest A.R."/>
            <person name="Zavolan M."/>
            <person name="Davis M.J."/>
            <person name="Wilming L.G."/>
            <person name="Aidinis V."/>
            <person name="Allen J.E."/>
            <person name="Ambesi-Impiombato A."/>
            <person name="Apweiler R."/>
            <person name="Aturaliya R.N."/>
            <person name="Bailey T.L."/>
            <person name="Bansal M."/>
            <person name="Baxter L."/>
            <person name="Beisel K.W."/>
            <person name="Bersano T."/>
            <person name="Bono H."/>
            <person name="Chalk A.M."/>
            <person name="Chiu K.P."/>
            <person name="Choudhary V."/>
            <person name="Christoffels A."/>
            <person name="Clutterbuck D.R."/>
            <person name="Crowe M.L."/>
            <person name="Dalla E."/>
            <person name="Dalrymple B.P."/>
            <person name="de Bono B."/>
            <person name="Della Gatta G."/>
            <person name="di Bernardo D."/>
            <person name="Down T."/>
            <person name="Engstrom P."/>
            <person name="Fagiolini M."/>
            <person name="Faulkner G."/>
            <person name="Fletcher C.F."/>
            <person name="Fukushima T."/>
            <person name="Furuno M."/>
            <person name="Futaki S."/>
            <person name="Gariboldi M."/>
            <person name="Georgii-Hemming P."/>
            <person name="Gingeras T.R."/>
            <person name="Gojobori T."/>
            <person name="Green R.E."/>
            <person name="Gustincich S."/>
            <person name="Harbers M."/>
            <person name="Hayashi Y."/>
            <person name="Hensch T.K."/>
            <person name="Hirokawa N."/>
            <person name="Hill D."/>
            <person name="Huminiecki L."/>
            <person name="Iacono M."/>
            <person name="Ikeo K."/>
            <person name="Iwama A."/>
            <person name="Ishikawa T."/>
            <person name="Jakt M."/>
            <person name="Kanapin A."/>
            <person name="Katoh M."/>
            <person name="Kawasawa Y."/>
            <person name="Kelso J."/>
            <person name="Kitamura H."/>
            <person name="Kitano H."/>
            <person name="Kollias G."/>
            <person name="Krishnan S.P."/>
            <person name="Kruger A."/>
            <person name="Kummerfeld S.K."/>
            <person name="Kurochkin I.V."/>
            <person name="Lareau L.F."/>
            <person name="Lazarevic D."/>
            <person name="Lipovich L."/>
            <person name="Liu J."/>
            <person name="Liuni S."/>
            <person name="McWilliam S."/>
            <person name="Madan Babu M."/>
            <person name="Madera M."/>
            <person name="Marchionni L."/>
            <person name="Matsuda H."/>
            <person name="Matsuzawa S."/>
            <person name="Miki H."/>
            <person name="Mignone F."/>
            <person name="Miyake S."/>
            <person name="Morris K."/>
            <person name="Mottagui-Tabar S."/>
            <person name="Mulder N."/>
            <person name="Nakano N."/>
            <person name="Nakauchi H."/>
            <person name="Ng P."/>
            <person name="Nilsson R."/>
            <person name="Nishiguchi S."/>
            <person name="Nishikawa S."/>
            <person name="Nori F."/>
            <person name="Ohara O."/>
            <person name="Okazaki Y."/>
            <person name="Orlando V."/>
            <person name="Pang K.C."/>
            <person name="Pavan W.J."/>
            <person name="Pavesi G."/>
            <person name="Pesole G."/>
            <person name="Petrovsky N."/>
            <person name="Piazza S."/>
            <person name="Reed J."/>
            <person name="Reid J.F."/>
            <person name="Ring B.Z."/>
            <person name="Ringwald M."/>
            <person name="Rost B."/>
            <person name="Ruan Y."/>
            <person name="Salzberg S.L."/>
            <person name="Sandelin A."/>
            <person name="Schneider C."/>
            <person name="Schoenbach C."/>
            <person name="Sekiguchi K."/>
            <person name="Semple C.A."/>
            <person name="Seno S."/>
            <person name="Sessa L."/>
            <person name="Sheng Y."/>
            <person name="Shibata Y."/>
            <person name="Shimada H."/>
            <person name="Shimada K."/>
            <person name="Silva D."/>
            <person name="Sinclair B."/>
            <person name="Sperling S."/>
            <person name="Stupka E."/>
            <person name="Sugiura K."/>
            <person name="Sultana R."/>
            <person name="Takenaka Y."/>
            <person name="Taki K."/>
            <person name="Tammoja K."/>
            <person name="Tan S.L."/>
            <person name="Tang S."/>
            <person name="Taylor M.S."/>
            <person name="Tegner J."/>
            <person name="Teichmann S.A."/>
            <person name="Ueda H.R."/>
            <person name="van Nimwegen E."/>
            <person name="Verardo R."/>
            <person name="Wei C.L."/>
            <person name="Yagi K."/>
            <person name="Yamanishi H."/>
            <person name="Zabarovsky E."/>
            <person name="Zhu S."/>
            <person name="Zimmer A."/>
            <person name="Hide W."/>
            <person name="Bult C."/>
            <person name="Grimmond S.M."/>
            <person name="Teasdale R.D."/>
            <person name="Liu E.T."/>
            <person name="Brusic V."/>
            <person name="Quackenbush J."/>
            <person name="Wahlestedt C."/>
            <person name="Mattick J.S."/>
            <person name="Hume D.A."/>
            <person name="Kai C."/>
            <person name="Sasaki D."/>
            <person name="Tomaru Y."/>
            <person name="Fukuda S."/>
            <person name="Kanamori-Katayama M."/>
            <person name="Suzuki M."/>
            <person name="Aoki J."/>
            <person name="Arakawa T."/>
            <person name="Iida J."/>
            <person name="Imamura K."/>
            <person name="Itoh M."/>
            <person name="Kato T."/>
            <person name="Kawaji H."/>
            <person name="Kawagashira N."/>
            <person name="Kawashima T."/>
            <person name="Kojima M."/>
            <person name="Kondo S."/>
            <person name="Konno H."/>
            <person name="Nakano K."/>
            <person name="Ninomiya N."/>
            <person name="Nishio T."/>
            <person name="Okada M."/>
            <person name="Plessy C."/>
            <person name="Shibata K."/>
            <person name="Shiraki T."/>
            <person name="Suzuki S."/>
            <person name="Tagami M."/>
            <person name="Waki K."/>
            <person name="Watahiki A."/>
            <person name="Okamura-Oho Y."/>
            <person name="Suzuki H."/>
            <person name="Kawai J."/>
            <person name="Hayashizaki Y."/>
        </authorList>
    </citation>
    <scope>NUCLEOTIDE SEQUENCE [LARGE SCALE MRNA] OF 1-639 (ISOFORM 5)</scope>
    <scope>NUCLEOTIDE SEQUENCE [LARGE SCALE MRNA] OF 1-640 (ISOFORM 4)</scope>
    <source>
        <strain>C57BL/6J</strain>
        <tissue>Aorta</tissue>
        <tissue>Testis</tissue>
        <tissue>Vagina</tissue>
        <tissue>Vein</tissue>
    </source>
</reference>
<reference key="5">
    <citation type="journal article" date="2004" name="DNA Res.">
        <title>Prediction of the coding sequences of mouse homologues of KIAA gene: IV. The complete nucleotide sequences of 500 mouse KIAA-homologous cDNAs identified by screening of terminal sequences of cDNA clones randomly sampled from size-fractionated libraries.</title>
        <authorList>
            <person name="Okazaki N."/>
            <person name="Kikuno R."/>
            <person name="Ohara R."/>
            <person name="Inamoto S."/>
            <person name="Koseki H."/>
            <person name="Hiraoka S."/>
            <person name="Saga Y."/>
            <person name="Seino S."/>
            <person name="Nishimura M."/>
            <person name="Kaisho T."/>
            <person name="Hoshino K."/>
            <person name="Kitamura H."/>
            <person name="Nagase T."/>
            <person name="Ohara O."/>
            <person name="Koga H."/>
        </authorList>
    </citation>
    <scope>NUCLEOTIDE SEQUENCE [LARGE SCALE MRNA] OF 305-1297 (ISOFORM 3)</scope>
    <source>
        <tissue>Embryonic intestine</tissue>
    </source>
</reference>
<reference key="6">
    <citation type="journal article" date="2007" name="Proc. Natl. Acad. Sci. U.S.A.">
        <title>Large-scale phosphorylation analysis of mouse liver.</title>
        <authorList>
            <person name="Villen J."/>
            <person name="Beausoleil S.A."/>
            <person name="Gerber S.A."/>
            <person name="Gygi S.P."/>
        </authorList>
    </citation>
    <scope>PHOSPHORYLATION [LARGE SCALE ANALYSIS] AT SER-284 AND SER-298</scope>
    <scope>IDENTIFICATION BY MASS SPECTROMETRY [LARGE SCALE ANALYSIS]</scope>
    <source>
        <tissue>Liver</tissue>
    </source>
</reference>
<reference key="7">
    <citation type="journal article" date="2010" name="Cell">
        <title>A tissue-specific atlas of mouse protein phosphorylation and expression.</title>
        <authorList>
            <person name="Huttlin E.L."/>
            <person name="Jedrychowski M.P."/>
            <person name="Elias J.E."/>
            <person name="Goswami T."/>
            <person name="Rad R."/>
            <person name="Beausoleil S.A."/>
            <person name="Villen J."/>
            <person name="Haas W."/>
            <person name="Sowa M.E."/>
            <person name="Gygi S.P."/>
        </authorList>
    </citation>
    <scope>PHOSPHORYLATION [LARGE SCALE ANALYSIS] AT SER-203; SER-257; SER-284 AND SER-678</scope>
    <scope>IDENTIFICATION BY MASS SPECTROMETRY [LARGE SCALE ANALYSIS]</scope>
    <source>
        <tissue>Brain</tissue>
        <tissue>Brown adipose tissue</tissue>
        <tissue>Heart</tissue>
        <tissue>Kidney</tissue>
        <tissue>Liver</tissue>
        <tissue>Lung</tissue>
        <tissue>Pancreas</tissue>
        <tissue>Spleen</tissue>
    </source>
</reference>
<dbReference type="EMBL" id="AB186125">
    <property type="protein sequence ID" value="BAD34967.1"/>
    <property type="molecule type" value="mRNA"/>
</dbReference>
<dbReference type="EMBL" id="AC093483">
    <property type="status" value="NOT_ANNOTATED_CDS"/>
    <property type="molecule type" value="Genomic_DNA"/>
</dbReference>
<dbReference type="EMBL" id="AC107662">
    <property type="status" value="NOT_ANNOTATED_CDS"/>
    <property type="molecule type" value="Genomic_DNA"/>
</dbReference>
<dbReference type="EMBL" id="BC031499">
    <property type="protein sequence ID" value="AAH31499.1"/>
    <property type="status" value="ALT_INIT"/>
    <property type="molecule type" value="mRNA"/>
</dbReference>
<dbReference type="EMBL" id="BC039211">
    <property type="protein sequence ID" value="AAH39211.1"/>
    <property type="molecule type" value="mRNA"/>
</dbReference>
<dbReference type="EMBL" id="BC139006">
    <property type="protein sequence ID" value="AAI39007.1"/>
    <property type="molecule type" value="mRNA"/>
</dbReference>
<dbReference type="EMBL" id="AK018850">
    <property type="protein sequence ID" value="BAB31463.1"/>
    <property type="status" value="ALT_SEQ"/>
    <property type="molecule type" value="mRNA"/>
</dbReference>
<dbReference type="EMBL" id="AK036871">
    <property type="protein sequence ID" value="BAC29612.1"/>
    <property type="molecule type" value="mRNA"/>
</dbReference>
<dbReference type="EMBL" id="AK040774">
    <property type="protein sequence ID" value="BAC30701.2"/>
    <property type="molecule type" value="mRNA"/>
</dbReference>
<dbReference type="EMBL" id="AK173252">
    <property type="protein sequence ID" value="BAD32530.1"/>
    <property type="molecule type" value="mRNA"/>
</dbReference>
<dbReference type="CCDS" id="CCDS23328.1">
    <molecule id="Q6AW69-4"/>
</dbReference>
<dbReference type="RefSeq" id="NP_001291291.1">
    <molecule id="Q6AW69-4"/>
    <property type="nucleotide sequence ID" value="NM_001304362.2"/>
</dbReference>
<dbReference type="RefSeq" id="NP_001394786.1">
    <molecule id="Q6AW69-4"/>
    <property type="nucleotide sequence ID" value="NM_001407857.1"/>
</dbReference>
<dbReference type="RefSeq" id="NP_080875.3">
    <molecule id="Q6AW69-4"/>
    <property type="nucleotide sequence ID" value="NM_026599.5"/>
</dbReference>
<dbReference type="RefSeq" id="XP_006511458.1">
    <molecule id="Q6AW69-4"/>
    <property type="nucleotide sequence ID" value="XM_006511395.1"/>
</dbReference>
<dbReference type="SMR" id="Q6AW69"/>
<dbReference type="BioGRID" id="212704">
    <property type="interactions" value="4"/>
</dbReference>
<dbReference type="FunCoup" id="Q6AW69">
    <property type="interactions" value="20"/>
</dbReference>
<dbReference type="STRING" id="10090.ENSMUSP00000072672"/>
<dbReference type="iPTMnet" id="Q6AW69"/>
<dbReference type="PhosphoSitePlus" id="Q6AW69"/>
<dbReference type="jPOST" id="Q6AW69"/>
<dbReference type="PaxDb" id="10090-ENSMUSP00000072672"/>
<dbReference type="PeptideAtlas" id="Q6AW69"/>
<dbReference type="ProteomicsDB" id="283897">
    <molecule id="Q6AW69-3"/>
</dbReference>
<dbReference type="ProteomicsDB" id="283898">
    <molecule id="Q6AW69-4"/>
</dbReference>
<dbReference type="ProteomicsDB" id="283899">
    <molecule id="Q6AW69-5"/>
</dbReference>
<dbReference type="ProteomicsDB" id="336909"/>
<dbReference type="Pumba" id="Q6AW69"/>
<dbReference type="Antibodypedia" id="42720">
    <property type="antibodies" value="78 antibodies from 17 providers"/>
</dbReference>
<dbReference type="Ensembl" id="ENSMUST00000072899.9">
    <molecule id="Q6AW69-4"/>
    <property type="protein sequence ID" value="ENSMUSP00000072672.3"/>
    <property type="gene ID" value="ENSMUSG00000032232.15"/>
</dbReference>
<dbReference type="Ensembl" id="ENSMUST00000121322.8">
    <molecule id="Q6AW69-3"/>
    <property type="protein sequence ID" value="ENSMUSP00000113917.2"/>
    <property type="gene ID" value="ENSMUSG00000032232.15"/>
</dbReference>
<dbReference type="Ensembl" id="ENSMUST00000122065.2">
    <molecule id="Q6AW69-4"/>
    <property type="protein sequence ID" value="ENSMUSP00000112479.2"/>
    <property type="gene ID" value="ENSMUSG00000032232.15"/>
</dbReference>
<dbReference type="GeneID" id="68178"/>
<dbReference type="KEGG" id="mmu:68178"/>
<dbReference type="AGR" id="MGI:1915428"/>
<dbReference type="CTD" id="84952"/>
<dbReference type="MGI" id="MGI:1915428">
    <property type="gene designation" value="Cgnl1"/>
</dbReference>
<dbReference type="VEuPathDB" id="HostDB:ENSMUSG00000032232"/>
<dbReference type="eggNOG" id="ENOG502QSXG">
    <property type="taxonomic scope" value="Eukaryota"/>
</dbReference>
<dbReference type="GeneTree" id="ENSGT00940000154489"/>
<dbReference type="HOGENOM" id="CLU_002036_2_1_1"/>
<dbReference type="InParanoid" id="Q6AW69"/>
<dbReference type="OMA" id="SEQNQVG"/>
<dbReference type="OrthoDB" id="6108017at2759"/>
<dbReference type="PhylomeDB" id="Q6AW69"/>
<dbReference type="TreeFam" id="TF332247"/>
<dbReference type="BioGRID-ORCS" id="68178">
    <property type="hits" value="2 hits in 61 CRISPR screens"/>
</dbReference>
<dbReference type="ChiTaRS" id="Cgnl1">
    <property type="organism name" value="mouse"/>
</dbReference>
<dbReference type="PRO" id="PR:Q6AW69"/>
<dbReference type="Proteomes" id="UP000000589">
    <property type="component" value="Chromosome 9"/>
</dbReference>
<dbReference type="RNAct" id="Q6AW69">
    <property type="molecule type" value="protein"/>
</dbReference>
<dbReference type="Bgee" id="ENSMUSG00000032232">
    <property type="expression patterns" value="Expressed in choroid plexus epithelium and 250 other cell types or tissues"/>
</dbReference>
<dbReference type="GO" id="GO:0015629">
    <property type="term" value="C:actin cytoskeleton"/>
    <property type="evidence" value="ECO:0000314"/>
    <property type="project" value="MGI"/>
</dbReference>
<dbReference type="GO" id="GO:0043296">
    <property type="term" value="C:apical junction complex"/>
    <property type="evidence" value="ECO:0000314"/>
    <property type="project" value="MGI"/>
</dbReference>
<dbReference type="GO" id="GO:0005923">
    <property type="term" value="C:bicellular tight junction"/>
    <property type="evidence" value="ECO:0000314"/>
    <property type="project" value="MGI"/>
</dbReference>
<dbReference type="GO" id="GO:0016459">
    <property type="term" value="C:myosin complex"/>
    <property type="evidence" value="ECO:0007669"/>
    <property type="project" value="InterPro"/>
</dbReference>
<dbReference type="GO" id="GO:0007015">
    <property type="term" value="P:actin filament organization"/>
    <property type="evidence" value="ECO:0000250"/>
    <property type="project" value="UniProtKB"/>
</dbReference>
<dbReference type="GO" id="GO:0051058">
    <property type="term" value="P:negative regulation of small GTPase mediated signal transduction"/>
    <property type="evidence" value="ECO:0000250"/>
    <property type="project" value="UniProtKB"/>
</dbReference>
<dbReference type="GO" id="GO:0051497">
    <property type="term" value="P:negative regulation of stress fiber assembly"/>
    <property type="evidence" value="ECO:0007669"/>
    <property type="project" value="Ensembl"/>
</dbReference>
<dbReference type="GO" id="GO:0150105">
    <property type="term" value="P:protein localization to cell-cell junction"/>
    <property type="evidence" value="ECO:0007669"/>
    <property type="project" value="Ensembl"/>
</dbReference>
<dbReference type="InterPro" id="IPR002928">
    <property type="entry name" value="Myosin_tail"/>
</dbReference>
<dbReference type="PANTHER" id="PTHR46349:SF2">
    <property type="entry name" value="CINGULIN-LIKE PROTEIN 1"/>
    <property type="match status" value="1"/>
</dbReference>
<dbReference type="PANTHER" id="PTHR46349">
    <property type="entry name" value="CINGULIN-LIKE PROTEIN 1-RELATED"/>
    <property type="match status" value="1"/>
</dbReference>
<dbReference type="Pfam" id="PF01576">
    <property type="entry name" value="Myosin_tail_1"/>
    <property type="match status" value="1"/>
</dbReference>
<comment type="function">
    <text evidence="5">May be involved in anchoring the apical junctional complex, especially tight junctions, to actin-based cytoskeletons.</text>
</comment>
<comment type="subunit">
    <text evidence="2 7">Homodimer or oligomer (Probable). Interacts with CD2AP and SH3BP1; probably part of a complex at cell junctions (By similarity).</text>
</comment>
<comment type="subcellular location">
    <subcellularLocation>
        <location evidence="5">Cell junction</location>
        <location evidence="5">Tight junction</location>
    </subcellularLocation>
    <text evidence="5">Localizes to the apical junction complex composed of tight and adherens junctions. In the liver and kidney, it is also found along non-junctional actin filament bundles in addition to the apical junction.</text>
</comment>
<comment type="alternative products">
    <event type="alternative splicing"/>
    <isoform>
        <id>Q6AW69-4</id>
        <name>4</name>
        <sequence type="displayed"/>
    </isoform>
    <isoform>
        <id>Q6AW69-3</id>
        <name>3</name>
        <sequence type="described" ref="VSP_061744"/>
    </isoform>
    <isoform>
        <id>Q6AW69-5</id>
        <name>5</name>
        <sequence type="described" ref="VSP_061743"/>
    </isoform>
</comment>
<comment type="tissue specificity">
    <text evidence="5">Widely expressed. Highly expressed in the kidney and lung.</text>
</comment>
<comment type="domain">
    <text evidence="5">The head region is responsible for both junction and actin filament-based distribution.</text>
</comment>
<comment type="similarity">
    <text evidence="6">Belongs to the cingulin family.</text>
</comment>
<comment type="sequence caution" evidence="6">
    <conflict type="erroneous initiation">
        <sequence resource="EMBL-CDS" id="AAH31499"/>
    </conflict>
    <text>Truncated N-terminus.</text>
</comment>
<comment type="sequence caution" evidence="6">
    <conflict type="miscellaneous discrepancy">
        <sequence resource="EMBL-CDS" id="BAB31463"/>
    </conflict>
    <text>Probable cloning artifact.</text>
</comment>
<keyword id="KW-0025">Alternative splicing</keyword>
<keyword id="KW-0965">Cell junction</keyword>
<keyword id="KW-0175">Coiled coil</keyword>
<keyword id="KW-0597">Phosphoprotein</keyword>
<keyword id="KW-1185">Reference proteome</keyword>
<keyword id="KW-0796">Tight junction</keyword>
<name>CGNL1_MOUSE</name>
<organism>
    <name type="scientific">Mus musculus</name>
    <name type="common">Mouse</name>
    <dbReference type="NCBI Taxonomy" id="10090"/>
    <lineage>
        <taxon>Eukaryota</taxon>
        <taxon>Metazoa</taxon>
        <taxon>Chordata</taxon>
        <taxon>Craniata</taxon>
        <taxon>Vertebrata</taxon>
        <taxon>Euteleostomi</taxon>
        <taxon>Mammalia</taxon>
        <taxon>Eutheria</taxon>
        <taxon>Euarchontoglires</taxon>
        <taxon>Glires</taxon>
        <taxon>Rodentia</taxon>
        <taxon>Myomorpha</taxon>
        <taxon>Muroidea</taxon>
        <taxon>Muridae</taxon>
        <taxon>Murinae</taxon>
        <taxon>Mus</taxon>
        <taxon>Mus</taxon>
    </lineage>
</organism>
<sequence>MELYFGEYQHVQQEYGVHLRLASGDTPKPRNSQPSKAGSYGVSIRVQGIDGHPYIVLNNTERCLAGTPFPENAPSFPSSVINNLSLHPSNGTVLKENTPEELQLPENPYLQTSPLRGQKQFSLHEGRNGVLERKDGPTKLPHVLNFQRHPELLQPYDPEKNEVNAKKHHPPESPWLRNATEDGTNCKKSRNCFPKSYGSQPNSPTSEDLAKTNMTAIRLCSSVVIEDPQKQTSVCVNVQRCAKEGVGEETLSPRRKSPTAPSPQAYSETKKNRPDVLPFRRQDSAGPILDGARSRRSSSSSTTPTSATSLYKFLLDDQECAIHADSVNRHENRRYIPFLPGTGRDIDTCSIPGVDQLIEKFDQKPGLQRRGRSGKRNRINPDDRKRSRSVDSAFPFGLQGNTEYLTEFSRNLGKSSEHLLRPSQVFPQRSVAQEHRGKHSPSSPPAKLQGAQGAHPKPPLQNKDGKVLNKGRQESTGACAPSLPAPNKKEEEIKIATATLMLQNRAVAATSDSGAKKISVKTFPSDSSTQATPDLLKGQQELTQQTNEETAKQILYNYLKEGGTDNEDATKRKVNLVFEKIQTLKSRAAGSAQGSNQAPNSPSEGNSLLDQKNKLILEVSELQQQLQLEMKNQQNIKEERERMREDLEELRVRHQSQVEETATLQRRLEESEGELRKSLEELFQVKMEREQHQTEIRDLQDQLSEMHDELDSTKRSEDREKGALIEELLQAKQDLQDLLIAKEEQEDLLRKRERELTALKGALKEEVSSHDQEMDKLKEQYDAELQALRESVEEATKNVEVLASRSNSSEQSQAEADLREKVLKEENEKLQGRIAELERRAAQLQRQMEDVKGDEAQAKETLRKCESEVQQLEEALVHARKEEKEATCARRALEKELEQARRELSQVSQEQKELLEKLRDEAEQKEQLRKLKNEMESERWHLDKTIEKLQKEMADIAEASRTSSLELQKQLGEYKEKNRRELAEMQTQLKEKCLEVEKARLAASKMQDELRLKEEELQDYQRAEEEALTKRQLLEQSLKDLEYELEAKSHLKDDRSRLIKQMEDKVSQLEIELEEERTNADLLSERITWSREQMEQMRSELLQEKAAKQDLECDKISLERQNKDLKSRIIHLEGSYRSSKEGLVVQMEARIAELEDRLENEERDRANLQLSNRRLERKVKELVMQVDDEHLSLTDQKDQLSLRLKAMKRQVEEAEEEIDRLESSKKKLQRELEEQMGVNEQLQGQLNSLKKGLRLKTLSSKVLDDSDDDDLSSDAGSLYEAPLSYAFPKDSTIASQI</sequence>
<proteinExistence type="evidence at protein level"/>
<evidence type="ECO:0000250" key="1"/>
<evidence type="ECO:0000250" key="2">
    <source>
        <dbReference type="UniProtKB" id="Q0VF96"/>
    </source>
</evidence>
<evidence type="ECO:0000255" key="3"/>
<evidence type="ECO:0000256" key="4">
    <source>
        <dbReference type="SAM" id="MobiDB-lite"/>
    </source>
</evidence>
<evidence type="ECO:0000269" key="5">
    <source>
    </source>
</evidence>
<evidence type="ECO:0000305" key="6"/>
<evidence type="ECO:0000305" key="7">
    <source>
    </source>
</evidence>
<evidence type="ECO:0000312" key="8">
    <source>
        <dbReference type="MGI" id="MGI:1915428"/>
    </source>
</evidence>
<evidence type="ECO:0007744" key="9">
    <source>
    </source>
</evidence>
<evidence type="ECO:0007744" key="10">
    <source>
    </source>
</evidence>
<gene>
    <name evidence="8" type="primary">Cgnl1</name>
    <name type="synonym">Jacop</name>
    <name type="synonym">Kiaa1749</name>
</gene>
<accession>Q6AW69</accession>
<accession>B2RSU6</accession>
<accession>Q5U5U0</accession>
<accession>Q69ZB4</accession>
<accession>Q8BLZ5</accession>
<accession>Q8BZ26</accession>
<accession>Q9D2T3</accession>
<protein>
    <recommendedName>
        <fullName evidence="6">Cingulin-like protein 1</fullName>
    </recommendedName>
    <alternativeName>
        <fullName>Junction-associated coiled-coil protein</fullName>
    </alternativeName>
</protein>
<feature type="chain" id="PRO_0000312876" description="Cingulin-like protein 1">
    <location>
        <begin position="1"/>
        <end position="1297"/>
    </location>
</feature>
<feature type="region of interest" description="Head">
    <location>
        <begin position="1"/>
        <end position="550"/>
    </location>
</feature>
<feature type="region of interest" description="Disordered" evidence="4">
    <location>
        <begin position="161"/>
        <end position="208"/>
    </location>
</feature>
<feature type="region of interest" description="Disordered" evidence="4">
    <location>
        <begin position="245"/>
        <end position="306"/>
    </location>
</feature>
<feature type="region of interest" description="Disordered" evidence="4">
    <location>
        <begin position="364"/>
        <end position="396"/>
    </location>
</feature>
<feature type="region of interest" description="Disordered" evidence="4">
    <location>
        <begin position="428"/>
        <end position="467"/>
    </location>
</feature>
<feature type="region of interest" description="Disordered" evidence="4">
    <location>
        <begin position="586"/>
        <end position="608"/>
    </location>
</feature>
<feature type="region of interest" description="Tail">
    <location>
        <begin position="1259"/>
        <end position="1297"/>
    </location>
</feature>
<feature type="coiled-coil region" evidence="3">
    <location>
        <begin position="604"/>
        <end position="1251"/>
    </location>
</feature>
<feature type="short sequence motif" description="ZIM" evidence="1">
    <location>
        <begin position="37"/>
        <end position="51"/>
    </location>
</feature>
<feature type="compositionally biased region" description="Polar residues" evidence="4">
    <location>
        <begin position="197"/>
        <end position="206"/>
    </location>
</feature>
<feature type="compositionally biased region" description="Basic and acidic residues" evidence="4">
    <location>
        <begin position="268"/>
        <end position="283"/>
    </location>
</feature>
<feature type="compositionally biased region" description="Low complexity" evidence="4">
    <location>
        <begin position="297"/>
        <end position="306"/>
    </location>
</feature>
<feature type="compositionally biased region" description="Basic residues" evidence="4">
    <location>
        <begin position="367"/>
        <end position="378"/>
    </location>
</feature>
<feature type="compositionally biased region" description="Basic and acidic residues" evidence="4">
    <location>
        <begin position="379"/>
        <end position="389"/>
    </location>
</feature>
<feature type="compositionally biased region" description="Polar residues" evidence="4">
    <location>
        <begin position="592"/>
        <end position="608"/>
    </location>
</feature>
<feature type="modified residue" description="Phosphoserine" evidence="2">
    <location>
        <position position="113"/>
    </location>
</feature>
<feature type="modified residue" description="Phosphoserine" evidence="10">
    <location>
        <position position="203"/>
    </location>
</feature>
<feature type="modified residue" description="Phosphoserine" evidence="10">
    <location>
        <position position="257"/>
    </location>
</feature>
<feature type="modified residue" description="Phosphoserine" evidence="9 10">
    <location>
        <position position="284"/>
    </location>
</feature>
<feature type="modified residue" description="Phosphoserine" evidence="9">
    <location>
        <position position="298"/>
    </location>
</feature>
<feature type="modified residue" description="Phosphoserine" evidence="2">
    <location>
        <position position="299"/>
    </location>
</feature>
<feature type="modified residue" description="Phosphoserine" evidence="2">
    <location>
        <position position="389"/>
    </location>
</feature>
<feature type="modified residue" description="Phosphoserine" evidence="2">
    <location>
        <position position="392"/>
    </location>
</feature>
<feature type="modified residue" description="Phosphoserine" evidence="2">
    <location>
        <position position="482"/>
    </location>
</feature>
<feature type="modified residue" description="Phosphoserine" evidence="10">
    <location>
        <position position="678"/>
    </location>
</feature>
<feature type="modified residue" description="Phosphoserine" evidence="2">
    <location>
        <position position="704"/>
    </location>
</feature>
<feature type="splice variant" id="VSP_061743" description="In isoform 5.">
    <location>
        <begin position="632"/>
        <end position="634"/>
    </location>
</feature>
<feature type="splice variant" id="VSP_061744" description="In isoform 3.">
    <location>
        <begin position="727"/>
        <end position="797"/>
    </location>
</feature>
<feature type="sequence conflict" description="In Ref. 1; BAD34967." evidence="6" ref="1">
    <original>G</original>
    <variation>GG</variation>
    <location>
        <position position="450"/>
    </location>
</feature>
<feature type="sequence conflict" description="In Ref. 4; BAC29612." evidence="6" ref="4">
    <original>K</original>
    <variation>I</variation>
    <location>
        <position position="463"/>
    </location>
</feature>
<feature type="sequence conflict" description="In Ref. 1; BAD34967." evidence="6" ref="1">
    <original>S</original>
    <variation>G</variation>
    <location>
        <position position="528"/>
    </location>
</feature>
<feature type="sequence conflict" description="In Ref. 1; BAD34967." evidence="6" ref="1">
    <original>L</original>
    <variation>F</variation>
    <location>
        <position position="788"/>
    </location>
</feature>
<feature type="sequence conflict" description="In Ref. 1; BAD34967 and 3; AAH39211." evidence="6" ref="1 3">
    <original>R</original>
    <variation>Q</variation>
    <location>
        <position position="901"/>
    </location>
</feature>
<feature type="sequence conflict" description="In Ref. 1; BAD34967 and 3; AAH39211." evidence="6" ref="1 3">
    <original>E</original>
    <variation>Q</variation>
    <location>
        <position position="947"/>
    </location>
</feature>